<feature type="chain" id="PRO_0000074629" description="Uncharacterized N-acetyltransferase Mb2688">
    <location>
        <begin position="1"/>
        <end position="156"/>
    </location>
</feature>
<feature type="domain" description="N-acetyltransferase" evidence="1">
    <location>
        <begin position="10"/>
        <end position="156"/>
    </location>
</feature>
<organism>
    <name type="scientific">Mycobacterium bovis (strain ATCC BAA-935 / AF2122/97)</name>
    <dbReference type="NCBI Taxonomy" id="233413"/>
    <lineage>
        <taxon>Bacteria</taxon>
        <taxon>Bacillati</taxon>
        <taxon>Actinomycetota</taxon>
        <taxon>Actinomycetes</taxon>
        <taxon>Mycobacteriales</taxon>
        <taxon>Mycobacteriaceae</taxon>
        <taxon>Mycobacterium</taxon>
        <taxon>Mycobacterium tuberculosis complex</taxon>
    </lineage>
</organism>
<proteinExistence type="inferred from homology"/>
<name>Y2688_MYCBO</name>
<protein>
    <recommendedName>
        <fullName>Uncharacterized N-acetyltransferase Mb2688</fullName>
        <ecNumber>2.3.1.-</ecNumber>
    </recommendedName>
</protein>
<gene>
    <name type="ordered locus">BQ2027_MB2688</name>
</gene>
<dbReference type="EC" id="2.3.1.-"/>
<dbReference type="EMBL" id="LT708304">
    <property type="protein sequence ID" value="SIU01306.1"/>
    <property type="molecule type" value="Genomic_DNA"/>
</dbReference>
<dbReference type="RefSeq" id="NP_856334.1">
    <property type="nucleotide sequence ID" value="NC_002945.3"/>
</dbReference>
<dbReference type="RefSeq" id="WP_003413852.1">
    <property type="nucleotide sequence ID" value="NC_002945.4"/>
</dbReference>
<dbReference type="SMR" id="P63426"/>
<dbReference type="KEGG" id="mbo:BQ2027_MB2688"/>
<dbReference type="PATRIC" id="fig|233413.5.peg.2947"/>
<dbReference type="Proteomes" id="UP000001419">
    <property type="component" value="Chromosome"/>
</dbReference>
<dbReference type="GO" id="GO:0016747">
    <property type="term" value="F:acyltransferase activity, transferring groups other than amino-acyl groups"/>
    <property type="evidence" value="ECO:0007669"/>
    <property type="project" value="InterPro"/>
</dbReference>
<dbReference type="CDD" id="cd04301">
    <property type="entry name" value="NAT_SF"/>
    <property type="match status" value="1"/>
</dbReference>
<dbReference type="FunFam" id="3.40.630.30:FF:000152">
    <property type="entry name" value="Uncharacterized N-acetyltransferase MT2743"/>
    <property type="match status" value="1"/>
</dbReference>
<dbReference type="Gene3D" id="3.40.630.30">
    <property type="match status" value="1"/>
</dbReference>
<dbReference type="InterPro" id="IPR016181">
    <property type="entry name" value="Acyl_CoA_acyltransferase"/>
</dbReference>
<dbReference type="InterPro" id="IPR050832">
    <property type="entry name" value="Bact_Acetyltransf"/>
</dbReference>
<dbReference type="InterPro" id="IPR000182">
    <property type="entry name" value="GNAT_dom"/>
</dbReference>
<dbReference type="PANTHER" id="PTHR43877">
    <property type="entry name" value="AMINOALKYLPHOSPHONATE N-ACETYLTRANSFERASE-RELATED-RELATED"/>
    <property type="match status" value="1"/>
</dbReference>
<dbReference type="Pfam" id="PF00583">
    <property type="entry name" value="Acetyltransf_1"/>
    <property type="match status" value="1"/>
</dbReference>
<dbReference type="SUPFAM" id="SSF55729">
    <property type="entry name" value="Acyl-CoA N-acyltransferases (Nat)"/>
    <property type="match status" value="1"/>
</dbReference>
<dbReference type="PROSITE" id="PS51186">
    <property type="entry name" value="GNAT"/>
    <property type="match status" value="1"/>
</dbReference>
<accession>P63426</accession>
<accession>A0A1R3Y2N2</accession>
<accession>P71966</accession>
<accession>X2BL47</accession>
<evidence type="ECO:0000255" key="1">
    <source>
        <dbReference type="PROSITE-ProRule" id="PRU00532"/>
    </source>
</evidence>
<evidence type="ECO:0000305" key="2"/>
<comment type="similarity">
    <text evidence="2">Belongs to the acetyltransferase family.</text>
</comment>
<reference key="1">
    <citation type="journal article" date="2003" name="Proc. Natl. Acad. Sci. U.S.A.">
        <title>The complete genome sequence of Mycobacterium bovis.</title>
        <authorList>
            <person name="Garnier T."/>
            <person name="Eiglmeier K."/>
            <person name="Camus J.-C."/>
            <person name="Medina N."/>
            <person name="Mansoor H."/>
            <person name="Pryor M."/>
            <person name="Duthoy S."/>
            <person name="Grondin S."/>
            <person name="Lacroix C."/>
            <person name="Monsempe C."/>
            <person name="Simon S."/>
            <person name="Harris B."/>
            <person name="Atkin R."/>
            <person name="Doggett J."/>
            <person name="Mayes R."/>
            <person name="Keating L."/>
            <person name="Wheeler P.R."/>
            <person name="Parkhill J."/>
            <person name="Barrell B.G."/>
            <person name="Cole S.T."/>
            <person name="Gordon S.V."/>
            <person name="Hewinson R.G."/>
        </authorList>
    </citation>
    <scope>NUCLEOTIDE SEQUENCE [LARGE SCALE GENOMIC DNA]</scope>
    <source>
        <strain>ATCC BAA-935 / AF2122/97</strain>
    </source>
</reference>
<reference key="2">
    <citation type="journal article" date="2017" name="Genome Announc.">
        <title>Updated reference genome sequence and annotation of Mycobacterium bovis AF2122/97.</title>
        <authorList>
            <person name="Malone K.M."/>
            <person name="Farrell D."/>
            <person name="Stuber T.P."/>
            <person name="Schubert O.T."/>
            <person name="Aebersold R."/>
            <person name="Robbe-Austerman S."/>
            <person name="Gordon S.V."/>
        </authorList>
    </citation>
    <scope>NUCLEOTIDE SEQUENCE [LARGE SCALE GENOMIC DNA]</scope>
    <scope>GENOME REANNOTATION</scope>
    <source>
        <strain>ATCC BAA-935 / AF2122/97</strain>
    </source>
</reference>
<keyword id="KW-0012">Acyltransferase</keyword>
<keyword id="KW-1185">Reference proteome</keyword>
<keyword id="KW-0808">Transferase</keyword>
<sequence>MTDADELAAVAARTFPLACPPAVAPEHIASFVDANLSSARFAEYLTDPRRAILTARHDGRIVGYAMLIRGDDRDVELSKLYLLPGYHGTGAAAALMHKVLATAADWGALRVWLGVNQKNQRAQRFYAKTGFKINGTRTFRLGAHHENDYVMVRELV</sequence>